<proteinExistence type="inferred from homology"/>
<feature type="initiator methionine" description="Removed" evidence="1">
    <location>
        <position position="1"/>
    </location>
</feature>
<feature type="chain" id="PRO_0000432810" description="GPCR-type G protein COLD1">
    <location>
        <begin position="2"/>
        <end position="468"/>
    </location>
</feature>
<feature type="transmembrane region" description="Helical; Name=1" evidence="2">
    <location>
        <begin position="7"/>
        <end position="27"/>
    </location>
</feature>
<feature type="transmembrane region" description="Helical; Name=2" evidence="2">
    <location>
        <begin position="45"/>
        <end position="65"/>
    </location>
</feature>
<feature type="transmembrane region" description="Helical; Name=3" evidence="2">
    <location>
        <begin position="82"/>
        <end position="102"/>
    </location>
</feature>
<feature type="transmembrane region" description="Helical; Name=4" evidence="2">
    <location>
        <begin position="112"/>
        <end position="132"/>
    </location>
</feature>
<feature type="transmembrane region" description="Helical; Name=5" evidence="2">
    <location>
        <begin position="153"/>
        <end position="173"/>
    </location>
</feature>
<feature type="transmembrane region" description="Helical; Name=6" evidence="2">
    <location>
        <begin position="297"/>
        <end position="319"/>
    </location>
</feature>
<feature type="transmembrane region" description="Helical; Name=7" evidence="2">
    <location>
        <begin position="345"/>
        <end position="365"/>
    </location>
</feature>
<feature type="transmembrane region" description="Helical; Name=8" evidence="2">
    <location>
        <begin position="389"/>
        <end position="409"/>
    </location>
</feature>
<feature type="transmembrane region" description="Helical; Name=9" evidence="2">
    <location>
        <begin position="437"/>
        <end position="457"/>
    </location>
</feature>
<feature type="coiled-coil region" evidence="2">
    <location>
        <begin position="243"/>
        <end position="279"/>
    </location>
</feature>
<feature type="lipid moiety-binding region" description="N-myristoyl glycine" evidence="1">
    <location>
        <position position="2"/>
    </location>
</feature>
<dbReference type="EMBL" id="CR855228">
    <property type="protein sequence ID" value="CAH67856.1"/>
    <property type="molecule type" value="Genomic_DNA"/>
</dbReference>
<dbReference type="EMBL" id="CM000129">
    <property type="protein sequence ID" value="EAY95417.1"/>
    <property type="molecule type" value="Genomic_DNA"/>
</dbReference>
<dbReference type="SMR" id="A2XX57"/>
<dbReference type="STRING" id="39946.A2XX57"/>
<dbReference type="TCDB" id="1.A.38.1.3">
    <property type="family name" value="the golgi ph regulator (gphr) family"/>
</dbReference>
<dbReference type="EnsemblPlants" id="BGIOSGA014418-TA">
    <property type="protein sequence ID" value="BGIOSGA014418-PA"/>
    <property type="gene ID" value="BGIOSGA014418"/>
</dbReference>
<dbReference type="Gramene" id="BGIOSGA014418-TA">
    <property type="protein sequence ID" value="BGIOSGA014418-PA"/>
    <property type="gene ID" value="BGIOSGA014418"/>
</dbReference>
<dbReference type="HOGENOM" id="CLU_030540_1_0_1"/>
<dbReference type="OMA" id="FSVYCVY"/>
<dbReference type="Proteomes" id="UP000007015">
    <property type="component" value="Chromosome 4"/>
</dbReference>
<dbReference type="GO" id="GO:0005789">
    <property type="term" value="C:endoplasmic reticulum membrane"/>
    <property type="evidence" value="ECO:0007669"/>
    <property type="project" value="UniProtKB-SubCell"/>
</dbReference>
<dbReference type="GO" id="GO:0005886">
    <property type="term" value="C:plasma membrane"/>
    <property type="evidence" value="ECO:0007669"/>
    <property type="project" value="UniProtKB-SubCell"/>
</dbReference>
<dbReference type="GO" id="GO:0010427">
    <property type="term" value="F:abscisic acid binding"/>
    <property type="evidence" value="ECO:0007669"/>
    <property type="project" value="TreeGrafter"/>
</dbReference>
<dbReference type="GO" id="GO:0051020">
    <property type="term" value="F:GTPase binding"/>
    <property type="evidence" value="ECO:0007669"/>
    <property type="project" value="EnsemblPlants"/>
</dbReference>
<dbReference type="GO" id="GO:0070417">
    <property type="term" value="P:cellular response to cold"/>
    <property type="evidence" value="ECO:0007669"/>
    <property type="project" value="EnsemblPlants"/>
</dbReference>
<dbReference type="GO" id="GO:0009737">
    <property type="term" value="P:response to abscisic acid"/>
    <property type="evidence" value="ECO:0007669"/>
    <property type="project" value="TreeGrafter"/>
</dbReference>
<dbReference type="InterPro" id="IPR025969">
    <property type="entry name" value="ABA_GPCR_dom"/>
</dbReference>
<dbReference type="InterPro" id="IPR022535">
    <property type="entry name" value="Golgi_pH-regulator_cons_dom"/>
</dbReference>
<dbReference type="InterPro" id="IPR015672">
    <property type="entry name" value="GPHR/GTG"/>
</dbReference>
<dbReference type="PANTHER" id="PTHR15948">
    <property type="entry name" value="G-PROTEIN COUPLED RECEPTOR 89-RELATED"/>
    <property type="match status" value="1"/>
</dbReference>
<dbReference type="PANTHER" id="PTHR15948:SF0">
    <property type="entry name" value="GOLGI PH REGULATOR A-RELATED"/>
    <property type="match status" value="1"/>
</dbReference>
<dbReference type="Pfam" id="PF12430">
    <property type="entry name" value="ABA_GPCR"/>
    <property type="match status" value="1"/>
</dbReference>
<dbReference type="Pfam" id="PF12537">
    <property type="entry name" value="GPHR_N"/>
    <property type="match status" value="1"/>
</dbReference>
<name>COLD1_ORYSI</name>
<sequence length="468" mass="53407">MGWGAVVYEGGVVGASLVGLGWAGLWFLNRRLYKEYEERRALVQILFGLVFAFSCNLFQLVLFEILPVLSKHARFLNWHLDLFCLILLLVFVLPYYHCYLLLRNSGVRRERALLVAALFLLVFLYGFWRMGIHFPMPSPEKGFFTMPQLVSRIGVIGVSVMAVLSGFGAVNLPYSYLSLFIREIDEMDIKTLERQLMQSMETCIAKKKKIVLSKMEMERIQGSEEKLKARSFLKRIVGTVVRSVQEDQTEQDIKSLDAEVQALEELSKQLFLEIYELRQAKIAAAFSRTWRGHAQNLLGYALSVYCVYKMLKSLQSVVFKEAGSVDPVTMTITIFLRHFDIGIDVTLLSQYISLIFIGMLVVISVRGFLANVMKFFFAVSRVGSGSTTNVVLFLSEIMGMYFISSILLIRKSLANEYRVIITDVLGGDIQFDFYHRWFDAIFVASAFLSLLLISAQYTSRQTDKHPID</sequence>
<reference key="1">
    <citation type="journal article" date="2002" name="Nature">
        <title>Sequence and analysis of rice chromosome 4.</title>
        <authorList>
            <person name="Feng Q."/>
            <person name="Zhang Y."/>
            <person name="Hao P."/>
            <person name="Wang S."/>
            <person name="Fu G."/>
            <person name="Huang Y."/>
            <person name="Li Y."/>
            <person name="Zhu J."/>
            <person name="Liu Y."/>
            <person name="Hu X."/>
            <person name="Jia P."/>
            <person name="Zhang Y."/>
            <person name="Zhao Q."/>
            <person name="Ying K."/>
            <person name="Yu S."/>
            <person name="Tang Y."/>
            <person name="Weng Q."/>
            <person name="Zhang L."/>
            <person name="Lu Y."/>
            <person name="Mu J."/>
            <person name="Lu Y."/>
            <person name="Zhang L.S."/>
            <person name="Yu Z."/>
            <person name="Fan D."/>
            <person name="Liu X."/>
            <person name="Lu T."/>
            <person name="Li C."/>
            <person name="Wu Y."/>
            <person name="Sun T."/>
            <person name="Lei H."/>
            <person name="Li T."/>
            <person name="Hu H."/>
            <person name="Guan J."/>
            <person name="Wu M."/>
            <person name="Zhang R."/>
            <person name="Zhou B."/>
            <person name="Chen Z."/>
            <person name="Chen L."/>
            <person name="Jin Z."/>
            <person name="Wang R."/>
            <person name="Yin H."/>
            <person name="Cai Z."/>
            <person name="Ren S."/>
            <person name="Lv G."/>
            <person name="Gu W."/>
            <person name="Zhu G."/>
            <person name="Tu Y."/>
            <person name="Jia J."/>
            <person name="Zhang Y."/>
            <person name="Chen J."/>
            <person name="Kang H."/>
            <person name="Chen X."/>
            <person name="Shao C."/>
            <person name="Sun Y."/>
            <person name="Hu Q."/>
            <person name="Zhang X."/>
            <person name="Zhang W."/>
            <person name="Wang L."/>
            <person name="Ding C."/>
            <person name="Sheng H."/>
            <person name="Gu J."/>
            <person name="Chen S."/>
            <person name="Ni L."/>
            <person name="Zhu F."/>
            <person name="Chen W."/>
            <person name="Lan L."/>
            <person name="Lai Y."/>
            <person name="Cheng Z."/>
            <person name="Gu M."/>
            <person name="Jiang J."/>
            <person name="Li J."/>
            <person name="Hong G."/>
            <person name="Xue Y."/>
            <person name="Han B."/>
        </authorList>
    </citation>
    <scope>NUCLEOTIDE SEQUENCE [LARGE SCALE GENOMIC DNA]</scope>
    <source>
        <strain>cv. Guang-Lu-Ai No.4</strain>
    </source>
</reference>
<reference key="2">
    <citation type="journal article" date="2005" name="PLoS Biol.">
        <title>The genomes of Oryza sativa: a history of duplications.</title>
        <authorList>
            <person name="Yu J."/>
            <person name="Wang J."/>
            <person name="Lin W."/>
            <person name="Li S."/>
            <person name="Li H."/>
            <person name="Zhou J."/>
            <person name="Ni P."/>
            <person name="Dong W."/>
            <person name="Hu S."/>
            <person name="Zeng C."/>
            <person name="Zhang J."/>
            <person name="Zhang Y."/>
            <person name="Li R."/>
            <person name="Xu Z."/>
            <person name="Li S."/>
            <person name="Li X."/>
            <person name="Zheng H."/>
            <person name="Cong L."/>
            <person name="Lin L."/>
            <person name="Yin J."/>
            <person name="Geng J."/>
            <person name="Li G."/>
            <person name="Shi J."/>
            <person name="Liu J."/>
            <person name="Lv H."/>
            <person name="Li J."/>
            <person name="Wang J."/>
            <person name="Deng Y."/>
            <person name="Ran L."/>
            <person name="Shi X."/>
            <person name="Wang X."/>
            <person name="Wu Q."/>
            <person name="Li C."/>
            <person name="Ren X."/>
            <person name="Wang J."/>
            <person name="Wang X."/>
            <person name="Li D."/>
            <person name="Liu D."/>
            <person name="Zhang X."/>
            <person name="Ji Z."/>
            <person name="Zhao W."/>
            <person name="Sun Y."/>
            <person name="Zhang Z."/>
            <person name="Bao J."/>
            <person name="Han Y."/>
            <person name="Dong L."/>
            <person name="Ji J."/>
            <person name="Chen P."/>
            <person name="Wu S."/>
            <person name="Liu J."/>
            <person name="Xiao Y."/>
            <person name="Bu D."/>
            <person name="Tan J."/>
            <person name="Yang L."/>
            <person name="Ye C."/>
            <person name="Zhang J."/>
            <person name="Xu J."/>
            <person name="Zhou Y."/>
            <person name="Yu Y."/>
            <person name="Zhang B."/>
            <person name="Zhuang S."/>
            <person name="Wei H."/>
            <person name="Liu B."/>
            <person name="Lei M."/>
            <person name="Yu H."/>
            <person name="Li Y."/>
            <person name="Xu H."/>
            <person name="Wei S."/>
            <person name="He X."/>
            <person name="Fang L."/>
            <person name="Zhang Z."/>
            <person name="Zhang Y."/>
            <person name="Huang X."/>
            <person name="Su Z."/>
            <person name="Tong W."/>
            <person name="Li J."/>
            <person name="Tong Z."/>
            <person name="Li S."/>
            <person name="Ye J."/>
            <person name="Wang L."/>
            <person name="Fang L."/>
            <person name="Lei T."/>
            <person name="Chen C.-S."/>
            <person name="Chen H.-C."/>
            <person name="Xu Z."/>
            <person name="Li H."/>
            <person name="Huang H."/>
            <person name="Zhang F."/>
            <person name="Xu H."/>
            <person name="Li N."/>
            <person name="Zhao C."/>
            <person name="Li S."/>
            <person name="Dong L."/>
            <person name="Huang Y."/>
            <person name="Li L."/>
            <person name="Xi Y."/>
            <person name="Qi Q."/>
            <person name="Li W."/>
            <person name="Zhang B."/>
            <person name="Hu W."/>
            <person name="Zhang Y."/>
            <person name="Tian X."/>
            <person name="Jiao Y."/>
            <person name="Liang X."/>
            <person name="Jin J."/>
            <person name="Gao L."/>
            <person name="Zheng W."/>
            <person name="Hao B."/>
            <person name="Liu S.-M."/>
            <person name="Wang W."/>
            <person name="Yuan L."/>
            <person name="Cao M."/>
            <person name="McDermott J."/>
            <person name="Samudrala R."/>
            <person name="Wang J."/>
            <person name="Wong G.K.-S."/>
            <person name="Yang H."/>
        </authorList>
    </citation>
    <scope>NUCLEOTIDE SEQUENCE [LARGE SCALE GENOMIC DNA]</scope>
    <source>
        <strain>cv. 93-11</strain>
    </source>
</reference>
<reference key="3">
    <citation type="journal article" date="2015" name="Cell">
        <title>COLD1 confers chilling tolerance in rice.</title>
        <authorList>
            <person name="Ma Y."/>
            <person name="Dai X."/>
            <person name="Xu Y."/>
            <person name="Luo W."/>
            <person name="Zheng X."/>
            <person name="Zeng D."/>
            <person name="Pan Y."/>
            <person name="Lin X."/>
            <person name="Liu H."/>
            <person name="Zhang D."/>
            <person name="Xiao J."/>
            <person name="Guo X."/>
            <person name="Xu S."/>
            <person name="Niu Y."/>
            <person name="Jin J."/>
            <person name="Zhang H."/>
            <person name="Xu X."/>
            <person name="Li L."/>
            <person name="Wang W."/>
            <person name="Qian Q."/>
            <person name="Ge S."/>
            <person name="Chong K."/>
        </authorList>
    </citation>
    <scope>FUNCTION</scope>
</reference>
<keyword id="KW-1003">Cell membrane</keyword>
<keyword id="KW-0175">Coiled coil</keyword>
<keyword id="KW-0256">Endoplasmic reticulum</keyword>
<keyword id="KW-0449">Lipoprotein</keyword>
<keyword id="KW-0472">Membrane</keyword>
<keyword id="KW-0519">Myristate</keyword>
<keyword id="KW-1185">Reference proteome</keyword>
<keyword id="KW-0346">Stress response</keyword>
<keyword id="KW-0812">Transmembrane</keyword>
<keyword id="KW-1133">Transmembrane helix</keyword>
<protein>
    <recommendedName>
        <fullName evidence="5">GPCR-type G protein COLD1</fullName>
    </recommendedName>
    <alternativeName>
        <fullName evidence="4">Protein CHILLING TOLERANCE DIVERGENCE 1</fullName>
    </alternativeName>
</protein>
<accession>A2XX57</accession>
<accession>Q01HU0</accession>
<gene>
    <name evidence="4" type="primary">COLD1</name>
    <name evidence="6" type="ORF">B0403H10-OSIGBa0105A11.8</name>
    <name evidence="7" type="ORF">OsI_17258</name>
</gene>
<comment type="function">
    <text evidence="3">Involved in chilling tolerance.</text>
</comment>
<comment type="subunit">
    <text evidence="1">Interacts with GPA1/RGA1.</text>
</comment>
<comment type="subcellular location">
    <subcellularLocation>
        <location evidence="1">Cell membrane</location>
        <topology evidence="2">Multi-pass membrane protein</topology>
    </subcellularLocation>
    <subcellularLocation>
        <location evidence="1">Endoplasmic reticulum membrane</location>
        <topology evidence="2">Multi-pass membrane protein</topology>
    </subcellularLocation>
</comment>
<comment type="miscellaneous">
    <text evidence="3">In cold tolerant cultivars (AC Q7X7S8) Met-187 is replaced by Lys-187. This polymorphism is associated with divergence in chilling tolerance of rice cultivars. COLD1 confers adaptation of japonica rice to chilling and originated from the Chinese wild populations of Oryza rufipogon.</text>
</comment>
<comment type="similarity">
    <text evidence="5">Belongs to the Golgi pH regulator (TC 1.A.38) family.</text>
</comment>
<organism>
    <name type="scientific">Oryza sativa subsp. indica</name>
    <name type="common">Rice</name>
    <dbReference type="NCBI Taxonomy" id="39946"/>
    <lineage>
        <taxon>Eukaryota</taxon>
        <taxon>Viridiplantae</taxon>
        <taxon>Streptophyta</taxon>
        <taxon>Embryophyta</taxon>
        <taxon>Tracheophyta</taxon>
        <taxon>Spermatophyta</taxon>
        <taxon>Magnoliopsida</taxon>
        <taxon>Liliopsida</taxon>
        <taxon>Poales</taxon>
        <taxon>Poaceae</taxon>
        <taxon>BOP clade</taxon>
        <taxon>Oryzoideae</taxon>
        <taxon>Oryzeae</taxon>
        <taxon>Oryzinae</taxon>
        <taxon>Oryza</taxon>
        <taxon>Oryza sativa</taxon>
    </lineage>
</organism>
<evidence type="ECO:0000250" key="1">
    <source>
        <dbReference type="UniProtKB" id="Q7X7S8"/>
    </source>
</evidence>
<evidence type="ECO:0000255" key="2"/>
<evidence type="ECO:0000269" key="3">
    <source>
    </source>
</evidence>
<evidence type="ECO:0000303" key="4">
    <source>
    </source>
</evidence>
<evidence type="ECO:0000305" key="5"/>
<evidence type="ECO:0000312" key="6">
    <source>
        <dbReference type="EMBL" id="CAH67856.1"/>
    </source>
</evidence>
<evidence type="ECO:0000312" key="7">
    <source>
        <dbReference type="EMBL" id="EAY95417.1"/>
    </source>
</evidence>